<organism>
    <name type="scientific">Aliivibrio salmonicida (strain LFI1238)</name>
    <name type="common">Vibrio salmonicida (strain LFI1238)</name>
    <dbReference type="NCBI Taxonomy" id="316275"/>
    <lineage>
        <taxon>Bacteria</taxon>
        <taxon>Pseudomonadati</taxon>
        <taxon>Pseudomonadota</taxon>
        <taxon>Gammaproteobacteria</taxon>
        <taxon>Vibrionales</taxon>
        <taxon>Vibrionaceae</taxon>
        <taxon>Aliivibrio</taxon>
    </lineage>
</organism>
<feature type="chain" id="PRO_1000101094" description="Lysine--tRNA ligase">
    <location>
        <begin position="1"/>
        <end position="501"/>
    </location>
</feature>
<feature type="binding site" evidence="1">
    <location>
        <position position="411"/>
    </location>
    <ligand>
        <name>Mg(2+)</name>
        <dbReference type="ChEBI" id="CHEBI:18420"/>
        <label>1</label>
    </ligand>
</feature>
<feature type="binding site" evidence="1">
    <location>
        <position position="418"/>
    </location>
    <ligand>
        <name>Mg(2+)</name>
        <dbReference type="ChEBI" id="CHEBI:18420"/>
        <label>1</label>
    </ligand>
</feature>
<feature type="binding site" evidence="1">
    <location>
        <position position="418"/>
    </location>
    <ligand>
        <name>Mg(2+)</name>
        <dbReference type="ChEBI" id="CHEBI:18420"/>
        <label>2</label>
    </ligand>
</feature>
<keyword id="KW-0030">Aminoacyl-tRNA synthetase</keyword>
<keyword id="KW-0067">ATP-binding</keyword>
<keyword id="KW-0963">Cytoplasm</keyword>
<keyword id="KW-0436">Ligase</keyword>
<keyword id="KW-0460">Magnesium</keyword>
<keyword id="KW-0479">Metal-binding</keyword>
<keyword id="KW-0547">Nucleotide-binding</keyword>
<keyword id="KW-0648">Protein biosynthesis</keyword>
<evidence type="ECO:0000255" key="1">
    <source>
        <dbReference type="HAMAP-Rule" id="MF_00252"/>
    </source>
</evidence>
<protein>
    <recommendedName>
        <fullName evidence="1">Lysine--tRNA ligase</fullName>
        <ecNumber evidence="1">6.1.1.6</ecNumber>
    </recommendedName>
    <alternativeName>
        <fullName evidence="1">Lysyl-tRNA synthetase</fullName>
        <shortName evidence="1">LysRS</shortName>
    </alternativeName>
</protein>
<accession>B6EMX2</accession>
<comment type="catalytic activity">
    <reaction evidence="1">
        <text>tRNA(Lys) + L-lysine + ATP = L-lysyl-tRNA(Lys) + AMP + diphosphate</text>
        <dbReference type="Rhea" id="RHEA:20792"/>
        <dbReference type="Rhea" id="RHEA-COMP:9696"/>
        <dbReference type="Rhea" id="RHEA-COMP:9697"/>
        <dbReference type="ChEBI" id="CHEBI:30616"/>
        <dbReference type="ChEBI" id="CHEBI:32551"/>
        <dbReference type="ChEBI" id="CHEBI:33019"/>
        <dbReference type="ChEBI" id="CHEBI:78442"/>
        <dbReference type="ChEBI" id="CHEBI:78529"/>
        <dbReference type="ChEBI" id="CHEBI:456215"/>
        <dbReference type="EC" id="6.1.1.6"/>
    </reaction>
</comment>
<comment type="cofactor">
    <cofactor evidence="1">
        <name>Mg(2+)</name>
        <dbReference type="ChEBI" id="CHEBI:18420"/>
    </cofactor>
    <text evidence="1">Binds 3 Mg(2+) ions per subunit.</text>
</comment>
<comment type="subunit">
    <text evidence="1">Homodimer.</text>
</comment>
<comment type="subcellular location">
    <subcellularLocation>
        <location evidence="1">Cytoplasm</location>
    </subcellularLocation>
</comment>
<comment type="similarity">
    <text evidence="1">Belongs to the class-II aminoacyl-tRNA synthetase family.</text>
</comment>
<dbReference type="EC" id="6.1.1.6" evidence="1"/>
<dbReference type="EMBL" id="FM178379">
    <property type="protein sequence ID" value="CAQ78251.1"/>
    <property type="molecule type" value="Genomic_DNA"/>
</dbReference>
<dbReference type="RefSeq" id="WP_012549374.1">
    <property type="nucleotide sequence ID" value="NC_011312.1"/>
</dbReference>
<dbReference type="SMR" id="B6EMX2"/>
<dbReference type="KEGG" id="vsa:VSAL_I0566"/>
<dbReference type="eggNOG" id="COG1190">
    <property type="taxonomic scope" value="Bacteria"/>
</dbReference>
<dbReference type="HOGENOM" id="CLU_008255_6_0_6"/>
<dbReference type="Proteomes" id="UP000001730">
    <property type="component" value="Chromosome 1"/>
</dbReference>
<dbReference type="GO" id="GO:0005829">
    <property type="term" value="C:cytosol"/>
    <property type="evidence" value="ECO:0007669"/>
    <property type="project" value="TreeGrafter"/>
</dbReference>
<dbReference type="GO" id="GO:0005524">
    <property type="term" value="F:ATP binding"/>
    <property type="evidence" value="ECO:0007669"/>
    <property type="project" value="UniProtKB-UniRule"/>
</dbReference>
<dbReference type="GO" id="GO:0004824">
    <property type="term" value="F:lysine-tRNA ligase activity"/>
    <property type="evidence" value="ECO:0007669"/>
    <property type="project" value="UniProtKB-UniRule"/>
</dbReference>
<dbReference type="GO" id="GO:0000287">
    <property type="term" value="F:magnesium ion binding"/>
    <property type="evidence" value="ECO:0007669"/>
    <property type="project" value="UniProtKB-UniRule"/>
</dbReference>
<dbReference type="GO" id="GO:0000049">
    <property type="term" value="F:tRNA binding"/>
    <property type="evidence" value="ECO:0007669"/>
    <property type="project" value="TreeGrafter"/>
</dbReference>
<dbReference type="GO" id="GO:0006430">
    <property type="term" value="P:lysyl-tRNA aminoacylation"/>
    <property type="evidence" value="ECO:0007669"/>
    <property type="project" value="UniProtKB-UniRule"/>
</dbReference>
<dbReference type="CDD" id="cd00775">
    <property type="entry name" value="LysRS_core"/>
    <property type="match status" value="1"/>
</dbReference>
<dbReference type="CDD" id="cd04322">
    <property type="entry name" value="LysRS_N"/>
    <property type="match status" value="1"/>
</dbReference>
<dbReference type="FunFam" id="2.40.50.140:FF:000024">
    <property type="entry name" value="Lysine--tRNA ligase"/>
    <property type="match status" value="1"/>
</dbReference>
<dbReference type="FunFam" id="3.30.930.10:FF:000001">
    <property type="entry name" value="Lysine--tRNA ligase"/>
    <property type="match status" value="1"/>
</dbReference>
<dbReference type="Gene3D" id="3.30.930.10">
    <property type="entry name" value="Bira Bifunctional Protein, Domain 2"/>
    <property type="match status" value="1"/>
</dbReference>
<dbReference type="Gene3D" id="2.40.50.140">
    <property type="entry name" value="Nucleic acid-binding proteins"/>
    <property type="match status" value="1"/>
</dbReference>
<dbReference type="HAMAP" id="MF_00252">
    <property type="entry name" value="Lys_tRNA_synth_class2"/>
    <property type="match status" value="1"/>
</dbReference>
<dbReference type="InterPro" id="IPR004364">
    <property type="entry name" value="Aa-tRNA-synt_II"/>
</dbReference>
<dbReference type="InterPro" id="IPR006195">
    <property type="entry name" value="aa-tRNA-synth_II"/>
</dbReference>
<dbReference type="InterPro" id="IPR045864">
    <property type="entry name" value="aa-tRNA-synth_II/BPL/LPL"/>
</dbReference>
<dbReference type="InterPro" id="IPR002313">
    <property type="entry name" value="Lys-tRNA-ligase_II"/>
</dbReference>
<dbReference type="InterPro" id="IPR044136">
    <property type="entry name" value="Lys-tRNA-ligase_II_N"/>
</dbReference>
<dbReference type="InterPro" id="IPR018149">
    <property type="entry name" value="Lys-tRNA-synth_II_C"/>
</dbReference>
<dbReference type="InterPro" id="IPR012340">
    <property type="entry name" value="NA-bd_OB-fold"/>
</dbReference>
<dbReference type="InterPro" id="IPR004365">
    <property type="entry name" value="NA-bd_OB_tRNA"/>
</dbReference>
<dbReference type="NCBIfam" id="TIGR00499">
    <property type="entry name" value="lysS_bact"/>
    <property type="match status" value="1"/>
</dbReference>
<dbReference type="NCBIfam" id="NF001756">
    <property type="entry name" value="PRK00484.1"/>
    <property type="match status" value="1"/>
</dbReference>
<dbReference type="PANTHER" id="PTHR42918:SF15">
    <property type="entry name" value="LYSINE--TRNA LIGASE, CHLOROPLASTIC_MITOCHONDRIAL"/>
    <property type="match status" value="1"/>
</dbReference>
<dbReference type="PANTHER" id="PTHR42918">
    <property type="entry name" value="LYSYL-TRNA SYNTHETASE"/>
    <property type="match status" value="1"/>
</dbReference>
<dbReference type="Pfam" id="PF00152">
    <property type="entry name" value="tRNA-synt_2"/>
    <property type="match status" value="1"/>
</dbReference>
<dbReference type="Pfam" id="PF01336">
    <property type="entry name" value="tRNA_anti-codon"/>
    <property type="match status" value="1"/>
</dbReference>
<dbReference type="PRINTS" id="PR00982">
    <property type="entry name" value="TRNASYNTHLYS"/>
</dbReference>
<dbReference type="SUPFAM" id="SSF55681">
    <property type="entry name" value="Class II aaRS and biotin synthetases"/>
    <property type="match status" value="1"/>
</dbReference>
<dbReference type="SUPFAM" id="SSF50249">
    <property type="entry name" value="Nucleic acid-binding proteins"/>
    <property type="match status" value="1"/>
</dbReference>
<dbReference type="PROSITE" id="PS50862">
    <property type="entry name" value="AA_TRNA_LIGASE_II"/>
    <property type="match status" value="1"/>
</dbReference>
<sequence length="501" mass="56874">MTDQVQLDENKLIAERRGKLDHIRQACKANGHPNDFRRDSLAADLQSEFGEKTKEELEELNHIVAIAGRVMAKRGPFLLIQEVSGKIQAYASKDVQKELKEKYQGLDIGDIIGVKGALHKSGKGDLYVNMEEFVLLTKALRPLPEKFHGLTDQEMRYRQRYVDLIVNEDSRTAFIIRSKVVSAIRNFMVDKGFMEVETPMMHVIPGGASARPFVTHHNALDVDMYLRVAPELYLKRLVVGGFERVFEINRNFRNEGLSPRHNPEFTMMEFYMAYADYNDLMDLTEAMLSQVAISVLGSDKMPYGEYTVDFGGKYARLSMLDAIKMYNPEHAEIQALTYDGVQDRDLMVSIAKSVHVEVESFWTCGQLLEEIFGETAEPKLMQPTFITEYPADISPLARRNDNNAFITDRFEFFIGGREVANGFSELNDAQDQDERFKAQVSAKESGDDEAMFYDADYITALEHGLPPTAGQGIGIDRLVMLFTNTHTIRDVILFPSMRPQA</sequence>
<reference key="1">
    <citation type="journal article" date="2008" name="BMC Genomics">
        <title>The genome sequence of the fish pathogen Aliivibrio salmonicida strain LFI1238 shows extensive evidence of gene decay.</title>
        <authorList>
            <person name="Hjerde E."/>
            <person name="Lorentzen M.S."/>
            <person name="Holden M.T."/>
            <person name="Seeger K."/>
            <person name="Paulsen S."/>
            <person name="Bason N."/>
            <person name="Churcher C."/>
            <person name="Harris D."/>
            <person name="Norbertczak H."/>
            <person name="Quail M.A."/>
            <person name="Sanders S."/>
            <person name="Thurston S."/>
            <person name="Parkhill J."/>
            <person name="Willassen N.P."/>
            <person name="Thomson N.R."/>
        </authorList>
    </citation>
    <scope>NUCLEOTIDE SEQUENCE [LARGE SCALE GENOMIC DNA]</scope>
    <source>
        <strain>LFI1238</strain>
    </source>
</reference>
<name>SYK_ALISL</name>
<gene>
    <name evidence="1" type="primary">lysS</name>
    <name type="ordered locus">VSAL_I0566</name>
</gene>
<proteinExistence type="inferred from homology"/>